<keyword id="KW-0143">Chaperone</keyword>
<keyword id="KW-1185">Reference proteome</keyword>
<organism>
    <name type="scientific">Paraburkholderia phymatum (strain DSM 17167 / CIP 108236 / LMG 21445 / STM815)</name>
    <name type="common">Burkholderia phymatum</name>
    <dbReference type="NCBI Taxonomy" id="391038"/>
    <lineage>
        <taxon>Bacteria</taxon>
        <taxon>Pseudomonadati</taxon>
        <taxon>Pseudomonadota</taxon>
        <taxon>Betaproteobacteria</taxon>
        <taxon>Burkholderiales</taxon>
        <taxon>Burkholderiaceae</taxon>
        <taxon>Paraburkholderia</taxon>
    </lineage>
</organism>
<accession>B2JIY6</accession>
<proteinExistence type="inferred from homology"/>
<name>HSCB_PARP8</name>
<reference key="1">
    <citation type="journal article" date="2014" name="Stand. Genomic Sci.">
        <title>Complete genome sequence of Burkholderia phymatum STM815(T), a broad host range and efficient nitrogen-fixing symbiont of Mimosa species.</title>
        <authorList>
            <person name="Moulin L."/>
            <person name="Klonowska A."/>
            <person name="Caroline B."/>
            <person name="Booth K."/>
            <person name="Vriezen J.A."/>
            <person name="Melkonian R."/>
            <person name="James E.K."/>
            <person name="Young J.P."/>
            <person name="Bena G."/>
            <person name="Hauser L."/>
            <person name="Land M."/>
            <person name="Kyrpides N."/>
            <person name="Bruce D."/>
            <person name="Chain P."/>
            <person name="Copeland A."/>
            <person name="Pitluck S."/>
            <person name="Woyke T."/>
            <person name="Lizotte-Waniewski M."/>
            <person name="Bristow J."/>
            <person name="Riley M."/>
        </authorList>
    </citation>
    <scope>NUCLEOTIDE SEQUENCE [LARGE SCALE GENOMIC DNA]</scope>
    <source>
        <strain>DSM 17167 / CIP 108236 / LMG 21445 / STM815</strain>
    </source>
</reference>
<gene>
    <name evidence="1" type="primary">hscB</name>
    <name type="ordered locus">Bphy_1455</name>
</gene>
<dbReference type="EMBL" id="CP001043">
    <property type="protein sequence ID" value="ACC70637.1"/>
    <property type="molecule type" value="Genomic_DNA"/>
</dbReference>
<dbReference type="RefSeq" id="WP_012400849.1">
    <property type="nucleotide sequence ID" value="NC_010622.1"/>
</dbReference>
<dbReference type="SMR" id="B2JIY6"/>
<dbReference type="STRING" id="391038.Bphy_1455"/>
<dbReference type="KEGG" id="bph:Bphy_1455"/>
<dbReference type="eggNOG" id="COG1076">
    <property type="taxonomic scope" value="Bacteria"/>
</dbReference>
<dbReference type="HOGENOM" id="CLU_068529_2_1_4"/>
<dbReference type="OrthoDB" id="287587at2"/>
<dbReference type="Proteomes" id="UP000001192">
    <property type="component" value="Chromosome 1"/>
</dbReference>
<dbReference type="GO" id="GO:1990230">
    <property type="term" value="C:iron-sulfur cluster transfer complex"/>
    <property type="evidence" value="ECO:0007669"/>
    <property type="project" value="TreeGrafter"/>
</dbReference>
<dbReference type="GO" id="GO:0001671">
    <property type="term" value="F:ATPase activator activity"/>
    <property type="evidence" value="ECO:0007669"/>
    <property type="project" value="InterPro"/>
</dbReference>
<dbReference type="GO" id="GO:0051087">
    <property type="term" value="F:protein-folding chaperone binding"/>
    <property type="evidence" value="ECO:0007669"/>
    <property type="project" value="InterPro"/>
</dbReference>
<dbReference type="GO" id="GO:0044571">
    <property type="term" value="P:[2Fe-2S] cluster assembly"/>
    <property type="evidence" value="ECO:0007669"/>
    <property type="project" value="InterPro"/>
</dbReference>
<dbReference type="GO" id="GO:0051259">
    <property type="term" value="P:protein complex oligomerization"/>
    <property type="evidence" value="ECO:0007669"/>
    <property type="project" value="InterPro"/>
</dbReference>
<dbReference type="GO" id="GO:0006457">
    <property type="term" value="P:protein folding"/>
    <property type="evidence" value="ECO:0007669"/>
    <property type="project" value="UniProtKB-UniRule"/>
</dbReference>
<dbReference type="CDD" id="cd06257">
    <property type="entry name" value="DnaJ"/>
    <property type="match status" value="1"/>
</dbReference>
<dbReference type="Gene3D" id="1.10.287.110">
    <property type="entry name" value="DnaJ domain"/>
    <property type="match status" value="1"/>
</dbReference>
<dbReference type="Gene3D" id="1.20.1280.20">
    <property type="entry name" value="HscB, C-terminal domain"/>
    <property type="match status" value="1"/>
</dbReference>
<dbReference type="HAMAP" id="MF_00682">
    <property type="entry name" value="HscB"/>
    <property type="match status" value="1"/>
</dbReference>
<dbReference type="InterPro" id="IPR001623">
    <property type="entry name" value="DnaJ_domain"/>
</dbReference>
<dbReference type="InterPro" id="IPR004640">
    <property type="entry name" value="HscB"/>
</dbReference>
<dbReference type="InterPro" id="IPR036386">
    <property type="entry name" value="HscB_C_sf"/>
</dbReference>
<dbReference type="InterPro" id="IPR009073">
    <property type="entry name" value="HscB_oligo_C"/>
</dbReference>
<dbReference type="InterPro" id="IPR036869">
    <property type="entry name" value="J_dom_sf"/>
</dbReference>
<dbReference type="NCBIfam" id="TIGR00714">
    <property type="entry name" value="hscB"/>
    <property type="match status" value="1"/>
</dbReference>
<dbReference type="NCBIfam" id="NF002935">
    <property type="entry name" value="PRK03578.1"/>
    <property type="match status" value="1"/>
</dbReference>
<dbReference type="PANTHER" id="PTHR14021">
    <property type="entry name" value="IRON-SULFUR CLUSTER CO-CHAPERONE PROTEIN HSCB"/>
    <property type="match status" value="1"/>
</dbReference>
<dbReference type="PANTHER" id="PTHR14021:SF15">
    <property type="entry name" value="IRON-SULFUR CLUSTER CO-CHAPERONE PROTEIN HSCB"/>
    <property type="match status" value="1"/>
</dbReference>
<dbReference type="Pfam" id="PF07743">
    <property type="entry name" value="HSCB_C"/>
    <property type="match status" value="1"/>
</dbReference>
<dbReference type="SMART" id="SM00271">
    <property type="entry name" value="DnaJ"/>
    <property type="match status" value="1"/>
</dbReference>
<dbReference type="SUPFAM" id="SSF46565">
    <property type="entry name" value="Chaperone J-domain"/>
    <property type="match status" value="1"/>
</dbReference>
<dbReference type="SUPFAM" id="SSF47144">
    <property type="entry name" value="HSC20 (HSCB), C-terminal oligomerisation domain"/>
    <property type="match status" value="1"/>
</dbReference>
<dbReference type="PROSITE" id="PS50076">
    <property type="entry name" value="DNAJ_2"/>
    <property type="match status" value="1"/>
</dbReference>
<feature type="chain" id="PRO_1000131729" description="Co-chaperone protein HscB homolog">
    <location>
        <begin position="1"/>
        <end position="175"/>
    </location>
</feature>
<feature type="domain" description="J" evidence="1">
    <location>
        <begin position="7"/>
        <end position="79"/>
    </location>
</feature>
<sequence length="175" mass="19597">MASLNDSHFALFNLPEQFGLDVSALDRAYRTVQAQVHPDRFAAAGDAQKRIAMQWATRTNEAYQTLHDPLKRARYLLSLRGIDVGAENNTAMEPAFLMQQMEWRESIEDASAAKNVDALDALLTDLRDEEKVRFTKLAALLDSGSNQAASEAVRQLMFIERVAAEIGTQIERLDN</sequence>
<evidence type="ECO:0000255" key="1">
    <source>
        <dbReference type="HAMAP-Rule" id="MF_00682"/>
    </source>
</evidence>
<protein>
    <recommendedName>
        <fullName evidence="1">Co-chaperone protein HscB homolog</fullName>
    </recommendedName>
</protein>
<comment type="function">
    <text evidence="1">Co-chaperone involved in the maturation of iron-sulfur cluster-containing proteins. Seems to help targeting proteins to be folded toward HscA.</text>
</comment>
<comment type="subunit">
    <text evidence="1">Interacts with HscA and stimulates its ATPase activity.</text>
</comment>
<comment type="similarity">
    <text evidence="1">Belongs to the HscB family.</text>
</comment>